<accession>Q2YDU8</accession>
<keyword id="KW-0007">Acetylation</keyword>
<keyword id="KW-0025">Alternative splicing</keyword>
<keyword id="KW-0445">Lipid transport</keyword>
<keyword id="KW-0458">Lysosome</keyword>
<keyword id="KW-0472">Membrane</keyword>
<keyword id="KW-0597">Phosphoprotein</keyword>
<keyword id="KW-1185">Reference proteome</keyword>
<keyword id="KW-0812">Transmembrane</keyword>
<keyword id="KW-1133">Transmembrane helix</keyword>
<keyword id="KW-0813">Transport</keyword>
<gene>
    <name type="primary">Spns1</name>
</gene>
<sequence>MAGSDTAPFLSQADDPDDGPAPGHPGLPGPMGNPKSGELEVPDCEGLQRITGLSRGHSTLIVVVLCYINLLNYMDRFTVAGVLTDIEQFFNIGDGSTGLIQTVFISSYMVLAPVFGYLGDRYNRKYLMCGGIAFWSLVTLGSSFIPREHFWLLLLTRGLVGVGEASYSTIAPTLIADLFVADQRSRMLSIFYFAIPVGSGLGYIAGSKVKDLAGDWHWALRVTPGLGVLAVLLLFLVVQEPPRGAVERHSGSPPLSPTSWWADLKALARNPSFVLSSLGFTAVAFVTGSLALWAPAFLLRSRVVLGETPPCLPGDSCSSSDSLIFGLITCLTGVLGVGLGVEISRRLRRFNPRADPLVCAAGLLGSSPFLFLSLACARGSIVATYIFIFIGETLLSMNWAIVADILLYVVIPTRRSTAEAFQIVLSHLLGDAGSPYLIGLISDRLRRSWPPSFLSEFRALQFSLMLCAFVGALGGAAFLGTAMFIENDRRRAQLHVQGLLHETEPSDDQIVVPQRGRSTRVPVSSVLI</sequence>
<proteinExistence type="evidence at transcript level"/>
<evidence type="ECO:0000250" key="1"/>
<evidence type="ECO:0000250" key="2">
    <source>
        <dbReference type="UniProtKB" id="Q9H2V7"/>
    </source>
</evidence>
<evidence type="ECO:0000255" key="3"/>
<evidence type="ECO:0000256" key="4">
    <source>
        <dbReference type="SAM" id="MobiDB-lite"/>
    </source>
</evidence>
<evidence type="ECO:0000269" key="5">
    <source>
    </source>
</evidence>
<evidence type="ECO:0000303" key="6">
    <source>
    </source>
</evidence>
<evidence type="ECO:0000305" key="7"/>
<protein>
    <recommendedName>
        <fullName>Protein spinster homolog 1</fullName>
    </recommendedName>
    <alternativeName>
        <fullName>RSpin1</fullName>
    </alternativeName>
    <alternativeName>
        <fullName>Spns1</fullName>
    </alternativeName>
</protein>
<feature type="initiator methionine" description="Removed" evidence="2">
    <location>
        <position position="1"/>
    </location>
</feature>
<feature type="chain" id="PRO_0000363952" description="Protein spinster homolog 1">
    <location>
        <begin position="2"/>
        <end position="528"/>
    </location>
</feature>
<feature type="transmembrane region" description="Helical" evidence="3">
    <location>
        <begin position="60"/>
        <end position="80"/>
    </location>
</feature>
<feature type="transmembrane region" description="Helical" evidence="3">
    <location>
        <begin position="98"/>
        <end position="118"/>
    </location>
</feature>
<feature type="transmembrane region" description="Helical" evidence="3">
    <location>
        <begin position="126"/>
        <end position="146"/>
    </location>
</feature>
<feature type="transmembrane region" description="Helical" evidence="3">
    <location>
        <begin position="160"/>
        <end position="180"/>
    </location>
</feature>
<feature type="transmembrane region" description="Helical" evidence="3">
    <location>
        <begin position="187"/>
        <end position="207"/>
    </location>
</feature>
<feature type="transmembrane region" description="Helical" evidence="3">
    <location>
        <begin position="218"/>
        <end position="238"/>
    </location>
</feature>
<feature type="transmembrane region" description="Helical" evidence="3">
    <location>
        <begin position="278"/>
        <end position="298"/>
    </location>
</feature>
<feature type="transmembrane region" description="Helical" evidence="3">
    <location>
        <begin position="323"/>
        <end position="343"/>
    </location>
</feature>
<feature type="transmembrane region" description="Helical" evidence="3">
    <location>
        <begin position="357"/>
        <end position="377"/>
    </location>
</feature>
<feature type="transmembrane region" description="Helical" evidence="3">
    <location>
        <begin position="381"/>
        <end position="401"/>
    </location>
</feature>
<feature type="transmembrane region" description="Helical" evidence="3">
    <location>
        <begin position="421"/>
        <end position="441"/>
    </location>
</feature>
<feature type="transmembrane region" description="Helical" evidence="3">
    <location>
        <begin position="465"/>
        <end position="485"/>
    </location>
</feature>
<feature type="region of interest" description="Disordered" evidence="4">
    <location>
        <begin position="1"/>
        <end position="38"/>
    </location>
</feature>
<feature type="modified residue" description="N-acetylalanine" evidence="2">
    <location>
        <position position="2"/>
    </location>
</feature>
<feature type="modified residue" description="Phosphoserine" evidence="2">
    <location>
        <position position="518"/>
    </location>
</feature>
<feature type="splice variant" id="VSP_036364" description="In isoform 2." evidence="6">
    <original>SLIFGLITCLTGVLGVGLGVEISRRLRRFNPRADPLVCAAGLLGSSPFLFLSLACARGSIVATYIFIFIGETLLSMNWAIVADILLYVVIPTRRSTAEAFQIVLSHLLGDAGSPYLIGLISDRLRRSWPPSFLSEFRALQFSLMLCAFVGALGGAAFLGTAMFIENDRRRAQLHVQGLLHETEPSDDQIVVPQRGRSTRVPVSSVLI</original>
    <variation>RYL</variation>
    <location>
        <begin position="322"/>
        <end position="528"/>
    </location>
</feature>
<reference key="1">
    <citation type="journal article" date="2004" name="Genome Res.">
        <title>The status, quality, and expansion of the NIH full-length cDNA project: the Mammalian Gene Collection (MGC).</title>
        <authorList>
            <consortium name="The MGC Project Team"/>
        </authorList>
    </citation>
    <scope>NUCLEOTIDE SEQUENCE [LARGE SCALE MRNA] (ISOFORMS 1 AND 2)</scope>
    <source>
        <tissue>Brain</tissue>
        <tissue>Testis</tissue>
    </source>
</reference>
<reference key="2">
    <citation type="journal article" date="2011" name="Proc. Natl. Acad. Sci. U.S.A.">
        <title>Spinster is required for autophagic lysosome reformation and mTOR reactivation following starvation.</title>
        <authorList>
            <person name="Rong Y."/>
            <person name="McPhee C.K."/>
            <person name="McPhee C."/>
            <person name="Deng S."/>
            <person name="Huang L."/>
            <person name="Chen L."/>
            <person name="Liu M."/>
            <person name="Tracy K."/>
            <person name="Baehrecke E.H."/>
            <person name="Baehreck E.H."/>
            <person name="Yu L."/>
            <person name="Lenardo M.J."/>
        </authorList>
    </citation>
    <scope>SUBCELLULAR LOCATION</scope>
</reference>
<dbReference type="EMBL" id="BC087072">
    <property type="status" value="NOT_ANNOTATED_CDS"/>
    <property type="molecule type" value="mRNA"/>
</dbReference>
<dbReference type="EMBL" id="BC110048">
    <property type="protein sequence ID" value="AAI10049.1"/>
    <property type="molecule type" value="mRNA"/>
</dbReference>
<dbReference type="RefSeq" id="NP_001034297.2">
    <molecule id="Q2YDU8-1"/>
    <property type="nucleotide sequence ID" value="NM_001039208.2"/>
</dbReference>
<dbReference type="RefSeq" id="XP_017444888.1">
    <molecule id="Q2YDU8-1"/>
    <property type="nucleotide sequence ID" value="XM_017589399.3"/>
</dbReference>
<dbReference type="SMR" id="Q2YDU8"/>
<dbReference type="FunCoup" id="Q2YDU8">
    <property type="interactions" value="2818"/>
</dbReference>
<dbReference type="STRING" id="10116.ENSRNOP00000024185"/>
<dbReference type="GlyGen" id="Q2YDU8">
    <property type="glycosylation" value="1 site"/>
</dbReference>
<dbReference type="PhosphoSitePlus" id="Q2YDU8"/>
<dbReference type="jPOST" id="Q2YDU8"/>
<dbReference type="PaxDb" id="10116-ENSRNOP00000024185"/>
<dbReference type="Ensembl" id="ENSRNOT00000024185.7">
    <molecule id="Q2YDU8-1"/>
    <property type="protein sequence ID" value="ENSRNOP00000024185.4"/>
    <property type="gene ID" value="ENSRNOG00000017621.7"/>
</dbReference>
<dbReference type="GeneID" id="361648"/>
<dbReference type="KEGG" id="rno:361648"/>
<dbReference type="UCSC" id="RGD:1305613">
    <molecule id="Q2YDU8-1"/>
    <property type="organism name" value="rat"/>
</dbReference>
<dbReference type="AGR" id="RGD:1305613"/>
<dbReference type="CTD" id="83985"/>
<dbReference type="RGD" id="1305613">
    <property type="gene designation" value="Spns1"/>
</dbReference>
<dbReference type="eggNOG" id="KOG1330">
    <property type="taxonomic scope" value="Eukaryota"/>
</dbReference>
<dbReference type="GeneTree" id="ENSGT00390000005976"/>
<dbReference type="HOGENOM" id="CLU_001265_5_12_1"/>
<dbReference type="InParanoid" id="Q2YDU8"/>
<dbReference type="OrthoDB" id="61410at9989"/>
<dbReference type="PhylomeDB" id="Q2YDU8"/>
<dbReference type="TreeFam" id="TF314395"/>
<dbReference type="PRO" id="PR:Q2YDU8"/>
<dbReference type="Proteomes" id="UP000002494">
    <property type="component" value="Chromosome 1"/>
</dbReference>
<dbReference type="Bgee" id="ENSRNOG00000017621">
    <property type="expression patterns" value="Expressed in cerebellum and 20 other cell types or tissues"/>
</dbReference>
<dbReference type="GO" id="GO:0005765">
    <property type="term" value="C:lysosomal membrane"/>
    <property type="evidence" value="ECO:0007669"/>
    <property type="project" value="UniProtKB-SubCell"/>
</dbReference>
<dbReference type="GO" id="GO:0005764">
    <property type="term" value="C:lysosome"/>
    <property type="evidence" value="ECO:0000266"/>
    <property type="project" value="RGD"/>
</dbReference>
<dbReference type="GO" id="GO:0016020">
    <property type="term" value="C:membrane"/>
    <property type="evidence" value="ECO:0000318"/>
    <property type="project" value="GO_Central"/>
</dbReference>
<dbReference type="GO" id="GO:0022857">
    <property type="term" value="F:transmembrane transporter activity"/>
    <property type="evidence" value="ECO:0000318"/>
    <property type="project" value="GO_Central"/>
</dbReference>
<dbReference type="GO" id="GO:0051977">
    <property type="term" value="P:lysophospholipid transport"/>
    <property type="evidence" value="ECO:0000266"/>
    <property type="project" value="RGD"/>
</dbReference>
<dbReference type="GO" id="GO:0033700">
    <property type="term" value="P:phospholipid efflux"/>
    <property type="evidence" value="ECO:0000266"/>
    <property type="project" value="RGD"/>
</dbReference>
<dbReference type="GO" id="GO:0035751">
    <property type="term" value="P:regulation of lysosomal lumen pH"/>
    <property type="evidence" value="ECO:0000266"/>
    <property type="project" value="RGD"/>
</dbReference>
<dbReference type="CDD" id="cd17328">
    <property type="entry name" value="MFS_spinster_like"/>
    <property type="match status" value="1"/>
</dbReference>
<dbReference type="FunFam" id="1.20.1250.20:FF:000097">
    <property type="entry name" value="protein spinster homolog 1"/>
    <property type="match status" value="1"/>
</dbReference>
<dbReference type="Gene3D" id="1.20.1250.20">
    <property type="entry name" value="MFS general substrate transporter like domains"/>
    <property type="match status" value="1"/>
</dbReference>
<dbReference type="InterPro" id="IPR011701">
    <property type="entry name" value="MFS"/>
</dbReference>
<dbReference type="InterPro" id="IPR020846">
    <property type="entry name" value="MFS_dom"/>
</dbReference>
<dbReference type="InterPro" id="IPR044770">
    <property type="entry name" value="MFS_spinster-like"/>
</dbReference>
<dbReference type="InterPro" id="IPR036259">
    <property type="entry name" value="MFS_trans_sf"/>
</dbReference>
<dbReference type="PANTHER" id="PTHR23505:SF13">
    <property type="entry name" value="PROTEIN SPINSTER HOMOLOG 1"/>
    <property type="match status" value="1"/>
</dbReference>
<dbReference type="PANTHER" id="PTHR23505">
    <property type="entry name" value="SPINSTER"/>
    <property type="match status" value="1"/>
</dbReference>
<dbReference type="Pfam" id="PF07690">
    <property type="entry name" value="MFS_1"/>
    <property type="match status" value="1"/>
</dbReference>
<dbReference type="SUPFAM" id="SSF103473">
    <property type="entry name" value="MFS general substrate transporter"/>
    <property type="match status" value="1"/>
</dbReference>
<dbReference type="PROSITE" id="PS50850">
    <property type="entry name" value="MFS"/>
    <property type="match status" value="1"/>
</dbReference>
<comment type="function">
    <text evidence="2">Plays a critical role in the phospholipid salvage pathway from lysosomes to the cytosol. Mediates the rate-limiting, proton-dependent, lysosomal efflux of lysophospholipids, which can then be reacylated by acyltransferases in the endoplasmic reticulum to form phospholipids. Selective for zwitterionic headgroups such as lysophosphatidylcholine (LPC) and lysophosphatidylethanolamine (LPE), can also transport lysophosphatidylglycerol (LPG), but not other anionic lysophospholipids, sphingosine, nor sphingomyelin. Transports lysophospholipids with saturated, monounsaturated, and polyunsaturated fatty acids, such as 1-hexadecanoyl-sn-glycero-3-phosphocholine, 1-(9Z-octadecenoyl)-sn-glycero-3-phosphocholine and 1-(4Z,7Z,10Z,13Z,16Z,19Z-docosahexaenoyl)-sn-glycero-3-phosphocholine, respectively. Can also transport lysoplasmalogen (LPC with a fatty alcohol) such as 1-(1Z-hexadecenyl)-sn-glycero-3-phosphocholine. Essential player in lysosomal homeostasis. Crucial for cell survival under conditions of nutrient limitation. May be involved in necrotic or autophagic cell death.</text>
</comment>
<comment type="catalytic activity">
    <reaction evidence="2">
        <text>a 1-acyl-sn-glycero-3-phosphocholine(out) + H(+)(out) = a 1-acyl-sn-glycero-3-phosphocholine(in) + H(+)(in)</text>
        <dbReference type="Rhea" id="RHEA:74435"/>
        <dbReference type="ChEBI" id="CHEBI:15378"/>
        <dbReference type="ChEBI" id="CHEBI:58168"/>
    </reaction>
</comment>
<comment type="catalytic activity">
    <reaction evidence="2">
        <text>1-hexadecanoyl-sn-glycero-3-phosphocholine(out) + H(+)(out) = 1-hexadecanoyl-sn-glycero-3-phosphocholine(in) + H(+)(in)</text>
        <dbReference type="Rhea" id="RHEA:74427"/>
        <dbReference type="ChEBI" id="CHEBI:15378"/>
        <dbReference type="ChEBI" id="CHEBI:72998"/>
    </reaction>
</comment>
<comment type="catalytic activity">
    <reaction evidence="2">
        <text>1-(9Z-octadecenoyl)-sn-glycero-3-phosphocholine(out) + H(+)(out) = 1-(9Z-octadecenoyl)-sn-glycero-3-phosphocholine(in) + H(+)(in)</text>
        <dbReference type="Rhea" id="RHEA:74411"/>
        <dbReference type="ChEBI" id="CHEBI:15378"/>
        <dbReference type="ChEBI" id="CHEBI:28610"/>
    </reaction>
</comment>
<comment type="catalytic activity">
    <reaction evidence="2">
        <text>1-(5Z,8Z,11Z,14Z-eicosatetraenoyl)-sn-glycero-3-phosphocholine(out) + H(+)(out) = 1-(5Z,8Z,11Z,14Z-eicosatetraenoyl)-sn-glycero-3-phosphocholine(in) + H(+)(in)</text>
        <dbReference type="Rhea" id="RHEA:74451"/>
        <dbReference type="ChEBI" id="CHEBI:15378"/>
        <dbReference type="ChEBI" id="CHEBI:74344"/>
    </reaction>
</comment>
<comment type="catalytic activity">
    <reaction evidence="2">
        <text>1-(4Z,7Z,10Z,13Z,16Z,19Z-docosahexaenoyl)-sn-glycero-3-phosphocholine(out) + H(+)(out) = 1-(4Z,7Z,10Z,13Z,16Z,19Z-docosahexaenoyl)-sn-glycero-3-phosphocholine(in) + H(+)(in)</text>
        <dbReference type="Rhea" id="RHEA:74423"/>
        <dbReference type="ChEBI" id="CHEBI:15378"/>
        <dbReference type="ChEBI" id="CHEBI:73873"/>
    </reaction>
</comment>
<comment type="catalytic activity">
    <reaction evidence="2">
        <text>a 1-acyl-sn-glycero-3-phosphoethanolamine(out) + H(+)(out) = a 1-acyl-sn-glycero-3-phosphoethanolamine(in) + H(+)(in)</text>
        <dbReference type="Rhea" id="RHEA:74439"/>
        <dbReference type="ChEBI" id="CHEBI:15378"/>
        <dbReference type="ChEBI" id="CHEBI:64381"/>
    </reaction>
</comment>
<comment type="catalytic activity">
    <reaction evidence="2">
        <text>1-(9Z-octadecenoyl)-sn-glycero-3-phosphoethanolamine(out) + H(+)(out) = 1-(9Z-octadecenoyl)-sn-glycero-3-phosphoethanolamine(in) + H(+)(in)</text>
        <dbReference type="Rhea" id="RHEA:74415"/>
        <dbReference type="ChEBI" id="CHEBI:15378"/>
        <dbReference type="ChEBI" id="CHEBI:74971"/>
    </reaction>
</comment>
<comment type="catalytic activity">
    <reaction evidence="2">
        <text>1-acyl-sn-glycero-3-phospho-(1'-sn-glycerol)(out) + H(+)(out) = 1-acyl-sn-glycero-3-phospho-(1'-sn-glycerol)(in) + H(+)(in)</text>
        <dbReference type="Rhea" id="RHEA:74443"/>
        <dbReference type="ChEBI" id="CHEBI:15378"/>
        <dbReference type="ChEBI" id="CHEBI:64840"/>
    </reaction>
</comment>
<comment type="catalytic activity">
    <reaction evidence="2">
        <text>1-(9Z-octadecenoyl)-sn-glycero-3-phospho-(1'-sn-glycerol)(out) + H(+)(out) = 1-(9Z-octadecenoyl)-sn-glycero-3-phospho-(1'-sn-glycerol)(in) + H(+)(in)</text>
        <dbReference type="Rhea" id="RHEA:74419"/>
        <dbReference type="ChEBI" id="CHEBI:15378"/>
        <dbReference type="ChEBI" id="CHEBI:72828"/>
    </reaction>
</comment>
<comment type="catalytic activity">
    <reaction evidence="2">
        <text>a 1-O-(1Z-alkenyl)-sn-glycero-3-phosphocholine(out) + H(+)(out) = a 1-O-(1Z-alkenyl)-sn-glycero-3-phosphocholine(in) + H(+)(in)</text>
        <dbReference type="Rhea" id="RHEA:74447"/>
        <dbReference type="ChEBI" id="CHEBI:15378"/>
        <dbReference type="ChEBI" id="CHEBI:77287"/>
    </reaction>
</comment>
<comment type="catalytic activity">
    <reaction evidence="2">
        <text>1-(1Z-hexadecenyl)-sn-glycero-3-phosphocholine(out) + H(+)(out) = 1-(1Z-hexadecenyl)-sn-glycero-3-phosphocholine(in) + H(+)(in)</text>
        <dbReference type="Rhea" id="RHEA:74431"/>
        <dbReference type="ChEBI" id="CHEBI:15378"/>
        <dbReference type="ChEBI" id="CHEBI:73850"/>
    </reaction>
</comment>
<comment type="catalytic activity">
    <reaction evidence="2">
        <text>a 1-O-(1Z-alkenyl)-sn-glycero-3-phosphoethanolamine(out) + H(+)(out) = a 1-O-(1Z-alkenyl)-sn-glycero-3-phosphoethanolamine(in) + H(+)(in)</text>
        <dbReference type="Rhea" id="RHEA:74455"/>
        <dbReference type="ChEBI" id="CHEBI:15378"/>
        <dbReference type="ChEBI" id="CHEBI:77288"/>
    </reaction>
</comment>
<comment type="catalytic activity">
    <reaction evidence="2">
        <text>1-O-(1Z-hexadecenyl)-sn-glycero-3-phosphoethanolamine(out) + H(+)(out) = 1-O-(1Z-hexadecenyl)-sn-glycero-3-phosphoethanolamine(in) + H(+)(in)</text>
        <dbReference type="Rhea" id="RHEA:74459"/>
        <dbReference type="ChEBI" id="CHEBI:15378"/>
        <dbReference type="ChEBI" id="CHEBI:133139"/>
    </reaction>
</comment>
<comment type="subunit">
    <text evidence="1">Interacts with BCL2 and BCL2L1.</text>
</comment>
<comment type="subcellular location">
    <subcellularLocation>
        <location evidence="5">Lysosome membrane</location>
        <topology evidence="1">Multi-pass membrane protein</topology>
    </subcellularLocation>
</comment>
<comment type="alternative products">
    <event type="alternative splicing"/>
    <isoform>
        <id>Q2YDU8-1</id>
        <name>1</name>
        <sequence type="displayed"/>
    </isoform>
    <isoform>
        <id>Q2YDU8-2</id>
        <name>2</name>
        <sequence type="described" ref="VSP_036364"/>
    </isoform>
</comment>
<comment type="similarity">
    <text evidence="7">Belongs to the major facilitator superfamily. Spinster (TC 2.A.1.49) family.</text>
</comment>
<comment type="sequence caution" evidence="7">
    <conflict type="frameshift">
        <sequence resource="EMBL" id="BC087072"/>
    </conflict>
</comment>
<name>SPNS1_RAT</name>
<organism>
    <name type="scientific">Rattus norvegicus</name>
    <name type="common">Rat</name>
    <dbReference type="NCBI Taxonomy" id="10116"/>
    <lineage>
        <taxon>Eukaryota</taxon>
        <taxon>Metazoa</taxon>
        <taxon>Chordata</taxon>
        <taxon>Craniata</taxon>
        <taxon>Vertebrata</taxon>
        <taxon>Euteleostomi</taxon>
        <taxon>Mammalia</taxon>
        <taxon>Eutheria</taxon>
        <taxon>Euarchontoglires</taxon>
        <taxon>Glires</taxon>
        <taxon>Rodentia</taxon>
        <taxon>Myomorpha</taxon>
        <taxon>Muroidea</taxon>
        <taxon>Muridae</taxon>
        <taxon>Murinae</taxon>
        <taxon>Rattus</taxon>
    </lineage>
</organism>